<organism>
    <name type="scientific">Bos taurus</name>
    <name type="common">Bovine</name>
    <dbReference type="NCBI Taxonomy" id="9913"/>
    <lineage>
        <taxon>Eukaryota</taxon>
        <taxon>Metazoa</taxon>
        <taxon>Chordata</taxon>
        <taxon>Craniata</taxon>
        <taxon>Vertebrata</taxon>
        <taxon>Euteleostomi</taxon>
        <taxon>Mammalia</taxon>
        <taxon>Eutheria</taxon>
        <taxon>Laurasiatheria</taxon>
        <taxon>Artiodactyla</taxon>
        <taxon>Ruminantia</taxon>
        <taxon>Pecora</taxon>
        <taxon>Bovidae</taxon>
        <taxon>Bovinae</taxon>
        <taxon>Bos</taxon>
    </lineage>
</organism>
<evidence type="ECO:0000250" key="1">
    <source>
        <dbReference type="UniProtKB" id="P17405"/>
    </source>
</evidence>
<evidence type="ECO:0000250" key="2">
    <source>
        <dbReference type="UniProtKB" id="Q04519"/>
    </source>
</evidence>
<evidence type="ECO:0000255" key="3"/>
<evidence type="ECO:0000255" key="4">
    <source>
        <dbReference type="PROSITE-ProRule" id="PRU00415"/>
    </source>
</evidence>
<evidence type="ECO:0000256" key="5">
    <source>
        <dbReference type="SAM" id="MobiDB-lite"/>
    </source>
</evidence>
<evidence type="ECO:0000305" key="6"/>
<dbReference type="EC" id="3.1.4.12" evidence="1"/>
<dbReference type="EC" id="3.1.4.3" evidence="1"/>
<dbReference type="EMBL" id="BC119881">
    <property type="protein sequence ID" value="AAI19882.1"/>
    <property type="molecule type" value="mRNA"/>
</dbReference>
<dbReference type="RefSeq" id="NP_001068655.1">
    <property type="nucleotide sequence ID" value="NM_001075187.1"/>
</dbReference>
<dbReference type="SMR" id="Q0VD19"/>
<dbReference type="FunCoup" id="Q0VD19">
    <property type="interactions" value="467"/>
</dbReference>
<dbReference type="STRING" id="9913.ENSBTAP00000020758"/>
<dbReference type="BindingDB" id="Q0VD19"/>
<dbReference type="ChEMBL" id="CHEMBL4295808"/>
<dbReference type="GlyCosmos" id="Q0VD19">
    <property type="glycosylation" value="6 sites, No reported glycans"/>
</dbReference>
<dbReference type="GlyGen" id="Q0VD19">
    <property type="glycosylation" value="6 sites"/>
</dbReference>
<dbReference type="PaxDb" id="9913-ENSBTAP00000020758"/>
<dbReference type="Ensembl" id="ENSBTAT00000020758.4">
    <property type="protein sequence ID" value="ENSBTAP00000020758.3"/>
    <property type="gene ID" value="ENSBTAG00000015628.4"/>
</dbReference>
<dbReference type="GeneID" id="505097"/>
<dbReference type="KEGG" id="bta:505097"/>
<dbReference type="CTD" id="6609"/>
<dbReference type="VEuPathDB" id="HostDB:ENSBTAG00000015628"/>
<dbReference type="VGNC" id="VGNC:35029">
    <property type="gene designation" value="SMPD1"/>
</dbReference>
<dbReference type="eggNOG" id="KOG3770">
    <property type="taxonomic scope" value="Eukaryota"/>
</dbReference>
<dbReference type="GeneTree" id="ENSGT00950000183182"/>
<dbReference type="HOGENOM" id="CLU_014743_3_1_1"/>
<dbReference type="InParanoid" id="Q0VD19"/>
<dbReference type="OMA" id="VWSQTRK"/>
<dbReference type="OrthoDB" id="282973at2759"/>
<dbReference type="TreeFam" id="TF313674"/>
<dbReference type="Reactome" id="R-BTA-9840310">
    <property type="pathway name" value="Glycosphingolipid catabolism"/>
</dbReference>
<dbReference type="Proteomes" id="UP000009136">
    <property type="component" value="Chromosome 15"/>
</dbReference>
<dbReference type="Bgee" id="ENSBTAG00000015628">
    <property type="expression patterns" value="Expressed in pons and 103 other cell types or tissues"/>
</dbReference>
<dbReference type="GO" id="GO:0036019">
    <property type="term" value="C:endolysosome"/>
    <property type="evidence" value="ECO:0000250"/>
    <property type="project" value="UniProtKB"/>
</dbReference>
<dbReference type="GO" id="GO:0005615">
    <property type="term" value="C:extracellular space"/>
    <property type="evidence" value="ECO:0000250"/>
    <property type="project" value="UniProtKB"/>
</dbReference>
<dbReference type="GO" id="GO:0005811">
    <property type="term" value="C:lipid droplet"/>
    <property type="evidence" value="ECO:0007669"/>
    <property type="project" value="UniProtKB-SubCell"/>
</dbReference>
<dbReference type="GO" id="GO:0005765">
    <property type="term" value="C:lysosomal membrane"/>
    <property type="evidence" value="ECO:0000314"/>
    <property type="project" value="AgBase"/>
</dbReference>
<dbReference type="GO" id="GO:0005764">
    <property type="term" value="C:lysosome"/>
    <property type="evidence" value="ECO:0000314"/>
    <property type="project" value="AgBase"/>
</dbReference>
<dbReference type="GO" id="GO:0045121">
    <property type="term" value="C:membrane raft"/>
    <property type="evidence" value="ECO:0000314"/>
    <property type="project" value="AgBase"/>
</dbReference>
<dbReference type="GO" id="GO:0005886">
    <property type="term" value="C:plasma membrane"/>
    <property type="evidence" value="ECO:0007669"/>
    <property type="project" value="Ensembl"/>
</dbReference>
<dbReference type="GO" id="GO:0061750">
    <property type="term" value="F:acid sphingomyelin phosphodiesterase activity"/>
    <property type="evidence" value="ECO:0000250"/>
    <property type="project" value="UniProtKB"/>
</dbReference>
<dbReference type="GO" id="GO:0016798">
    <property type="term" value="F:hydrolase activity, acting on glycosyl bonds"/>
    <property type="evidence" value="ECO:0007669"/>
    <property type="project" value="UniProtKB-KW"/>
</dbReference>
<dbReference type="GO" id="GO:0034480">
    <property type="term" value="F:phosphatidylcholine phospholipase C activity"/>
    <property type="evidence" value="ECO:0007669"/>
    <property type="project" value="RHEA"/>
</dbReference>
<dbReference type="GO" id="GO:0004767">
    <property type="term" value="F:sphingomyelin phosphodiesterase activity"/>
    <property type="evidence" value="ECO:0000250"/>
    <property type="project" value="UniProtKB"/>
</dbReference>
<dbReference type="GO" id="GO:0008270">
    <property type="term" value="F:zinc ion binding"/>
    <property type="evidence" value="ECO:0000250"/>
    <property type="project" value="UniProtKB"/>
</dbReference>
<dbReference type="GO" id="GO:0071277">
    <property type="term" value="P:cellular response to calcium ion"/>
    <property type="evidence" value="ECO:0000250"/>
    <property type="project" value="UniProtKB"/>
</dbReference>
<dbReference type="GO" id="GO:0034644">
    <property type="term" value="P:cellular response to UV"/>
    <property type="evidence" value="ECO:0000250"/>
    <property type="project" value="UniProtKB"/>
</dbReference>
<dbReference type="GO" id="GO:0046513">
    <property type="term" value="P:ceramide biosynthetic process"/>
    <property type="evidence" value="ECO:0000314"/>
    <property type="project" value="AgBase"/>
</dbReference>
<dbReference type="GO" id="GO:0008203">
    <property type="term" value="P:cholesterol metabolic process"/>
    <property type="evidence" value="ECO:0007669"/>
    <property type="project" value="Ensembl"/>
</dbReference>
<dbReference type="GO" id="GO:0043409">
    <property type="term" value="P:negative regulation of MAPK cascade"/>
    <property type="evidence" value="ECO:0007669"/>
    <property type="project" value="Ensembl"/>
</dbReference>
<dbReference type="GO" id="GO:0001778">
    <property type="term" value="P:plasma membrane repair"/>
    <property type="evidence" value="ECO:0000250"/>
    <property type="project" value="UniProtKB"/>
</dbReference>
<dbReference type="GO" id="GO:0043065">
    <property type="term" value="P:positive regulation of apoptotic process"/>
    <property type="evidence" value="ECO:0000250"/>
    <property type="project" value="UniProtKB"/>
</dbReference>
<dbReference type="GO" id="GO:0045807">
    <property type="term" value="P:positive regulation of endocytosis"/>
    <property type="evidence" value="ECO:0000250"/>
    <property type="project" value="UniProtKB"/>
</dbReference>
<dbReference type="GO" id="GO:0046598">
    <property type="term" value="P:positive regulation of viral entry into host cell"/>
    <property type="evidence" value="ECO:0007669"/>
    <property type="project" value="Ensembl"/>
</dbReference>
<dbReference type="GO" id="GO:0070555">
    <property type="term" value="P:response to interleukin-1"/>
    <property type="evidence" value="ECO:0000250"/>
    <property type="project" value="UniProtKB"/>
</dbReference>
<dbReference type="GO" id="GO:0010212">
    <property type="term" value="P:response to ionizing radiation"/>
    <property type="evidence" value="ECO:0000250"/>
    <property type="project" value="UniProtKB"/>
</dbReference>
<dbReference type="GO" id="GO:0034612">
    <property type="term" value="P:response to tumor necrosis factor"/>
    <property type="evidence" value="ECO:0000250"/>
    <property type="project" value="UniProtKB"/>
</dbReference>
<dbReference type="GO" id="GO:0034340">
    <property type="term" value="P:response to type I interferon"/>
    <property type="evidence" value="ECO:0000250"/>
    <property type="project" value="UniProtKB"/>
</dbReference>
<dbReference type="GO" id="GO:0009615">
    <property type="term" value="P:response to virus"/>
    <property type="evidence" value="ECO:0000250"/>
    <property type="project" value="UniProtKB"/>
</dbReference>
<dbReference type="GO" id="GO:0006685">
    <property type="term" value="P:sphingomyelin catabolic process"/>
    <property type="evidence" value="ECO:0000250"/>
    <property type="project" value="UniProtKB"/>
</dbReference>
<dbReference type="GO" id="GO:0046718">
    <property type="term" value="P:symbiont entry into host cell"/>
    <property type="evidence" value="ECO:0000250"/>
    <property type="project" value="UniProtKB"/>
</dbReference>
<dbReference type="GO" id="GO:0023021">
    <property type="term" value="P:termination of signal transduction"/>
    <property type="evidence" value="ECO:0007669"/>
    <property type="project" value="Ensembl"/>
</dbReference>
<dbReference type="GO" id="GO:0042060">
    <property type="term" value="P:wound healing"/>
    <property type="evidence" value="ECO:0000250"/>
    <property type="project" value="UniProtKB"/>
</dbReference>
<dbReference type="CDD" id="cd00842">
    <property type="entry name" value="MPP_ASMase"/>
    <property type="match status" value="1"/>
</dbReference>
<dbReference type="FunFam" id="3.60.21.10:FF:000045">
    <property type="entry name" value="Sphingomyelin phosphodiesterase"/>
    <property type="match status" value="1"/>
</dbReference>
<dbReference type="Gene3D" id="3.60.21.10">
    <property type="match status" value="1"/>
</dbReference>
<dbReference type="InterPro" id="IPR045473">
    <property type="entry name" value="ASM_C"/>
</dbReference>
<dbReference type="InterPro" id="IPR041805">
    <property type="entry name" value="ASMase/PPN1_MPP"/>
</dbReference>
<dbReference type="InterPro" id="IPR004843">
    <property type="entry name" value="Calcineurin-like_PHP_ApaH"/>
</dbReference>
<dbReference type="InterPro" id="IPR029052">
    <property type="entry name" value="Metallo-depent_PP-like"/>
</dbReference>
<dbReference type="InterPro" id="IPR011001">
    <property type="entry name" value="Saposin-like"/>
</dbReference>
<dbReference type="InterPro" id="IPR008139">
    <property type="entry name" value="SaposinB_dom"/>
</dbReference>
<dbReference type="InterPro" id="IPR011160">
    <property type="entry name" value="Sphingomy_PDE"/>
</dbReference>
<dbReference type="PANTHER" id="PTHR10340">
    <property type="entry name" value="SPHINGOMYELIN PHOSPHODIESTERASE"/>
    <property type="match status" value="1"/>
</dbReference>
<dbReference type="PANTHER" id="PTHR10340:SF34">
    <property type="entry name" value="SPHINGOMYELIN PHOSPHODIESTERASE"/>
    <property type="match status" value="1"/>
</dbReference>
<dbReference type="Pfam" id="PF19272">
    <property type="entry name" value="ASMase_C"/>
    <property type="match status" value="1"/>
</dbReference>
<dbReference type="Pfam" id="PF00149">
    <property type="entry name" value="Metallophos"/>
    <property type="match status" value="1"/>
</dbReference>
<dbReference type="PIRSF" id="PIRSF000948">
    <property type="entry name" value="Sphingomy_PDE"/>
    <property type="match status" value="1"/>
</dbReference>
<dbReference type="SMART" id="SM00741">
    <property type="entry name" value="SapB"/>
    <property type="match status" value="1"/>
</dbReference>
<dbReference type="SUPFAM" id="SSF56300">
    <property type="entry name" value="Metallo-dependent phosphatases"/>
    <property type="match status" value="1"/>
</dbReference>
<dbReference type="SUPFAM" id="SSF47862">
    <property type="entry name" value="Saposin"/>
    <property type="match status" value="1"/>
</dbReference>
<dbReference type="PROSITE" id="PS50015">
    <property type="entry name" value="SAP_B"/>
    <property type="match status" value="1"/>
</dbReference>
<accession>Q0VD19</accession>
<keyword id="KW-1015">Disulfide bond</keyword>
<keyword id="KW-0325">Glycoprotein</keyword>
<keyword id="KW-0326">Glycosidase</keyword>
<keyword id="KW-0378">Hydrolase</keyword>
<keyword id="KW-0551">Lipid droplet</keyword>
<keyword id="KW-0443">Lipid metabolism</keyword>
<keyword id="KW-0458">Lysosome</keyword>
<keyword id="KW-0479">Metal-binding</keyword>
<keyword id="KW-0597">Phosphoprotein</keyword>
<keyword id="KW-1185">Reference proteome</keyword>
<keyword id="KW-0964">Secreted</keyword>
<keyword id="KW-0732">Signal</keyword>
<keyword id="KW-0862">Zinc</keyword>
<gene>
    <name type="primary">SMPD1</name>
</gene>
<feature type="signal peptide" evidence="3">
    <location>
        <begin position="1"/>
        <end position="40"/>
    </location>
</feature>
<feature type="chain" id="PRO_0000288775" description="Sphingomyelin phosphodiesterase">
    <location>
        <begin position="41"/>
        <end position="625"/>
    </location>
</feature>
<feature type="chain" id="PRO_0000456683" description="Sphingomyelin phosphodiesterase, processed form" evidence="2">
    <location>
        <begin position="248"/>
        <end position="625"/>
    </location>
</feature>
<feature type="domain" description="Saposin B-type" evidence="4">
    <location>
        <begin position="81"/>
        <end position="165"/>
    </location>
</feature>
<feature type="region of interest" description="Disordered" evidence="5">
    <location>
        <begin position="1"/>
        <end position="20"/>
    </location>
</feature>
<feature type="binding site" evidence="1">
    <location>
        <position position="202"/>
    </location>
    <ligand>
        <name>Zn(2+)</name>
        <dbReference type="ChEBI" id="CHEBI:29105"/>
        <label>1</label>
    </ligand>
</feature>
<feature type="binding site" evidence="1">
    <location>
        <position position="204"/>
    </location>
    <ligand>
        <name>Zn(2+)</name>
        <dbReference type="ChEBI" id="CHEBI:29105"/>
        <label>1</label>
    </ligand>
</feature>
<feature type="binding site" evidence="1">
    <location>
        <position position="274"/>
    </location>
    <ligand>
        <name>Zn(2+)</name>
        <dbReference type="ChEBI" id="CHEBI:29105"/>
        <label>1</label>
    </ligand>
</feature>
<feature type="binding site" evidence="1">
    <location>
        <position position="274"/>
    </location>
    <ligand>
        <name>Zn(2+)</name>
        <dbReference type="ChEBI" id="CHEBI:29105"/>
        <label>2</label>
    </ligand>
</feature>
<feature type="binding site" evidence="1">
    <location>
        <position position="314"/>
    </location>
    <ligand>
        <name>Zn(2+)</name>
        <dbReference type="ChEBI" id="CHEBI:29105"/>
        <label>2</label>
    </ligand>
</feature>
<feature type="binding site" evidence="1">
    <location>
        <position position="421"/>
    </location>
    <ligand>
        <name>Zn(2+)</name>
        <dbReference type="ChEBI" id="CHEBI:29105"/>
        <label>2</label>
    </ligand>
</feature>
<feature type="binding site" evidence="1">
    <location>
        <position position="453"/>
    </location>
    <ligand>
        <name>Zn(2+)</name>
        <dbReference type="ChEBI" id="CHEBI:29105"/>
        <label>2</label>
    </ligand>
</feature>
<feature type="binding site" evidence="1">
    <location>
        <position position="455"/>
    </location>
    <ligand>
        <name>Zn(2+)</name>
        <dbReference type="ChEBI" id="CHEBI:29105"/>
        <label>1</label>
    </ligand>
</feature>
<feature type="site" description="Cleavage; by CASP7" evidence="2">
    <location>
        <begin position="247"/>
        <end position="248"/>
    </location>
</feature>
<feature type="modified residue" description="Phosphoserine" evidence="1">
    <location>
        <position position="504"/>
    </location>
</feature>
<feature type="glycosylation site" description="N-linked (GlcNAc...) asparagine" evidence="4">
    <location>
        <position position="82"/>
    </location>
</feature>
<feature type="glycosylation site" description="N-linked (GlcNAc...) asparagine" evidence="4">
    <location>
        <position position="171"/>
    </location>
</feature>
<feature type="glycosylation site" description="N-linked (GlcNAc...) asparagine" evidence="4">
    <location>
        <position position="331"/>
    </location>
</feature>
<feature type="glycosylation site" description="N-linked (GlcNAc...) asparagine" evidence="4">
    <location>
        <position position="391"/>
    </location>
</feature>
<feature type="glycosylation site" description="N-linked (GlcNAc...) asparagine" evidence="4">
    <location>
        <position position="499"/>
    </location>
</feature>
<feature type="glycosylation site" description="N-linked (GlcNAc...) asparagine" evidence="4">
    <location>
        <position position="516"/>
    </location>
</feature>
<feature type="disulfide bond" evidence="4">
    <location>
        <begin position="85"/>
        <end position="161"/>
    </location>
</feature>
<feature type="disulfide bond" evidence="4">
    <location>
        <begin position="88"/>
        <end position="153"/>
    </location>
</feature>
<feature type="disulfide bond" evidence="4">
    <location>
        <begin position="116"/>
        <end position="127"/>
    </location>
</feature>
<feature type="disulfide bond" evidence="4">
    <location>
        <begin position="217"/>
        <end position="222"/>
    </location>
</feature>
<feature type="disulfide bond" evidence="4">
    <location>
        <begin position="223"/>
        <end position="246"/>
    </location>
</feature>
<feature type="disulfide bond" evidence="4">
    <location>
        <begin position="381"/>
        <end position="427"/>
    </location>
</feature>
<feature type="disulfide bond" evidence="4">
    <location>
        <begin position="580"/>
        <end position="584"/>
    </location>
</feature>
<feature type="disulfide bond" evidence="4">
    <location>
        <begin position="590"/>
        <end position="603"/>
    </location>
</feature>
<comment type="function">
    <text evidence="1">Converts sphingomyelin to ceramide. Exists as two enzymatic forms that arise from alternative trafficking of a single protein precursor, one that is targeted to the endolysosomal compartment, whereas the other is released extracellularly. However, in response to various forms of stress, lysosomal exocytosis may represent a major source of the secretory form.</text>
</comment>
<comment type="function">
    <text evidence="1">In the lysosomes, converts sphingomyelin to ceramide. Plays an important role in the export of cholesterol from the intraendolysosomal membranes. Also has phospholipase C activities toward 1,2-diacylglycerolphosphocholine and 1,2-diacylglycerolphosphoglycerol. Modulates stress-induced apoptosis through the production of ceramide.</text>
</comment>
<comment type="function">
    <text evidence="1">When secreted, modulates cell signaling with its ability to reorganize the plasma membrane by converting sphingomyelin to ceramide. Secreted form is increased in response to stress and inflammatory mediators such as IL1B, IFNG or TNF as well as upon infection with bacteria and viruses. Produces the release of ceramide in the outer leaflet of the plasma membrane playing a central role in host defense. Ceramide reorganizes these rafts into larger signaling platforms that are required to internalize bacteria, induce apoptosis and regulate the cytokine response in infected cells. In wounded cells, the lysosomal form is released extracellularly in the presence of Ca(2+) and promotes endocytosis and plasma membrane repair.</text>
</comment>
<comment type="function">
    <molecule>Sphingomyelin phosphodiesterase, processed form</molecule>
    <text evidence="2">This form is generated following cleavage by CASP7 in the extracellular milieu in response to bacterial infection (By similarity). It shows increased ability to convert sphingomyelin to ceramide and promotes plasma membrane repair. Plasma membrane repair by ceramide counteracts the action of gasdermin-D (GSDMD) perforin (PRF1) pores that are formed in response to bacterial infection (By similarity).</text>
</comment>
<comment type="catalytic activity">
    <reaction evidence="1">
        <text>a sphingomyelin + H2O = phosphocholine + an N-acylsphing-4-enine + H(+)</text>
        <dbReference type="Rhea" id="RHEA:19253"/>
        <dbReference type="ChEBI" id="CHEBI:15377"/>
        <dbReference type="ChEBI" id="CHEBI:15378"/>
        <dbReference type="ChEBI" id="CHEBI:17636"/>
        <dbReference type="ChEBI" id="CHEBI:52639"/>
        <dbReference type="ChEBI" id="CHEBI:295975"/>
        <dbReference type="EC" id="3.1.4.12"/>
    </reaction>
    <physiologicalReaction direction="left-to-right" evidence="1">
        <dbReference type="Rhea" id="RHEA:19254"/>
    </physiologicalReaction>
</comment>
<comment type="catalytic activity">
    <reaction evidence="1">
        <text>N-(octadecanoyl)-sphing-4-enine-1-phosphocholine + H2O = N-octadecanoylsphing-4-enine + phosphocholine + H(+)</text>
        <dbReference type="Rhea" id="RHEA:54284"/>
        <dbReference type="ChEBI" id="CHEBI:15377"/>
        <dbReference type="ChEBI" id="CHEBI:15378"/>
        <dbReference type="ChEBI" id="CHEBI:72961"/>
        <dbReference type="ChEBI" id="CHEBI:83358"/>
        <dbReference type="ChEBI" id="CHEBI:295975"/>
    </reaction>
    <physiologicalReaction direction="left-to-right" evidence="1">
        <dbReference type="Rhea" id="RHEA:54285"/>
    </physiologicalReaction>
</comment>
<comment type="catalytic activity">
    <reaction evidence="1">
        <text>a 1,2-diacyl-sn-glycero-3-phosphocholine + H2O = phosphocholine + a 1,2-diacyl-sn-glycerol + H(+)</text>
        <dbReference type="Rhea" id="RHEA:10604"/>
        <dbReference type="ChEBI" id="CHEBI:15377"/>
        <dbReference type="ChEBI" id="CHEBI:15378"/>
        <dbReference type="ChEBI" id="CHEBI:17815"/>
        <dbReference type="ChEBI" id="CHEBI:57643"/>
        <dbReference type="ChEBI" id="CHEBI:295975"/>
        <dbReference type="EC" id="3.1.4.3"/>
    </reaction>
    <physiologicalReaction direction="left-to-right" evidence="1">
        <dbReference type="Rhea" id="RHEA:10605"/>
    </physiologicalReaction>
</comment>
<comment type="catalytic activity">
    <reaction evidence="1">
        <text>1,2-dihexadecanoyl-sn-glycero-3-phosphocholine + H2O = 1,2-dihexadecanoyl-sn-glycerol + phosphocholine + H(+)</text>
        <dbReference type="Rhea" id="RHEA:45304"/>
        <dbReference type="ChEBI" id="CHEBI:15377"/>
        <dbReference type="ChEBI" id="CHEBI:15378"/>
        <dbReference type="ChEBI" id="CHEBI:72999"/>
        <dbReference type="ChEBI" id="CHEBI:82929"/>
        <dbReference type="ChEBI" id="CHEBI:295975"/>
    </reaction>
    <physiologicalReaction direction="left-to-right" evidence="1">
        <dbReference type="Rhea" id="RHEA:45305"/>
    </physiologicalReaction>
</comment>
<comment type="catalytic activity">
    <molecule>Sphingomyelin phosphodiesterase, processed form</molecule>
    <reaction evidence="2">
        <text>a sphingomyelin + H2O = phosphocholine + an N-acylsphing-4-enine + H(+)</text>
        <dbReference type="Rhea" id="RHEA:19253"/>
        <dbReference type="ChEBI" id="CHEBI:15377"/>
        <dbReference type="ChEBI" id="CHEBI:15378"/>
        <dbReference type="ChEBI" id="CHEBI:17636"/>
        <dbReference type="ChEBI" id="CHEBI:52639"/>
        <dbReference type="ChEBI" id="CHEBI:295975"/>
        <dbReference type="EC" id="3.1.4.12"/>
    </reaction>
    <physiologicalReaction direction="left-to-right" evidence="2">
        <dbReference type="Rhea" id="RHEA:19254"/>
    </physiologicalReaction>
</comment>
<comment type="cofactor">
    <cofactor evidence="1">
        <name>Zn(2+)</name>
        <dbReference type="ChEBI" id="CHEBI:29105"/>
    </cofactor>
    <text evidence="1">Binds 2 Zn(2+) ions per subunit.</text>
</comment>
<comment type="activity regulation">
    <text evidence="1">Hydrolysis of liposomal sphingomyelin is stimulated by incorporation of diacylglycerol (DAG), ceramide and free fatty acids into the liposomal membranes. Phosphatidylcholine hydrolysis is inhibited by incorporation of cholesterol, ceramide, DAG, monoacylglycerol and fatty acids.</text>
</comment>
<comment type="subunit">
    <text evidence="1">Monomer. Interacts with SORT1; the interaction is required for SMPD1 targeting to lysosomes.</text>
</comment>
<comment type="subcellular location">
    <subcellularLocation>
        <location evidence="1">Lysosome</location>
    </subcellularLocation>
    <subcellularLocation>
        <location evidence="1">Lipid droplet</location>
    </subcellularLocation>
    <subcellularLocation>
        <location evidence="1">Secreted</location>
    </subcellularLocation>
    <text evidence="1">The secreted form is induced in a time- and dose-dependent by IL1B and TNF as well as stress and viral infection. This increase of the secreted form seems to be due to exocytosis of the lysosomal form and is Ca(2+)-dependent. Secretion is dependent of phosphorylation at Ser-504. Secretion is induced by inflammatory mediators such as IL1B, IFNG or TNF as well as infection with bacteria and viruses.</text>
</comment>
<comment type="subcellular location">
    <molecule>Sphingomyelin phosphodiesterase, processed form</molecule>
    <subcellularLocation>
        <location evidence="2">Secreted</location>
        <location evidence="2">Extracellular space</location>
    </subcellularLocation>
    <text evidence="2">This form is generated following cleavage by CASP7.</text>
</comment>
<comment type="PTM">
    <text evidence="1">Proteolytically processed. Mature lysosomal form arises from C-terminal proteolytic processing of pro-sphingomyelin phosphodiesterase.</text>
</comment>
<comment type="PTM">
    <text evidence="1">Both lysosomal and secreted forms are glycosylated but they show a differential pattern of glycosylation.</text>
</comment>
<comment type="PTM">
    <text evidence="1">Phosphorylated at Ser-504 by PRKCD upon stress stimuli. Phosphorylation is required for secretion.</text>
</comment>
<comment type="PTM">
    <molecule>Sphingomyelin phosphodiesterase, processed form</molecule>
    <text evidence="2">This form is generated following cleavage by CASP7 in the extracellular milieu (By similarity). It shows increased activity (By similarity).</text>
</comment>
<comment type="miscellaneous">
    <text>There are two types of sphingomyelinases: ASM (acid), and NSM (neutral).</text>
</comment>
<comment type="similarity">
    <text evidence="6">Belongs to the acid sphingomyelinase family.</text>
</comment>
<reference key="1">
    <citation type="submission" date="2006-08" db="EMBL/GenBank/DDBJ databases">
        <authorList>
            <consortium name="NIH - Mammalian Gene Collection (MGC) project"/>
        </authorList>
    </citation>
    <scope>NUCLEOTIDE SEQUENCE [LARGE SCALE MRNA]</scope>
    <source>
        <strain>Hereford</strain>
        <tissue>Thalamus</tissue>
    </source>
</reference>
<protein>
    <recommendedName>
        <fullName>Sphingomyelin phosphodiesterase</fullName>
        <ecNumber evidence="1">3.1.4.12</ecNumber>
        <ecNumber evidence="1">3.1.4.3</ecNumber>
    </recommendedName>
    <alternativeName>
        <fullName>Acid sphingomyelinase</fullName>
        <shortName>aSMase</shortName>
    </alternativeName>
    <component>
        <recommendedName>
            <fullName evidence="6">Sphingomyelin phosphodiesterase, processed form</fullName>
        </recommendedName>
    </component>
</protein>
<name>ASM_BOVIN</name>
<proteinExistence type="evidence at transcript level"/>
<sequence>MPRHGVSPGQGLPRSGREQASDRSLGAPCLRLLWLGLALALALPNSPVLWSPAEARPLPTQGHPAKFIRIAPQLQEAFGWWNLTCPTCKGLFTAIDFGLRNQASVAWVGSVAIKLCVLLKIAPPAVCQSAVQLFEDDMVEVWTRSVLSPSEACGLLLGSSCGHWDIFSSWNISLPAVPKPPPQPPKPPAPGSPVSRVLFLTDLHWDHDYLEGTDPNCENPLCCRRDSGPPPASQPGAGYWGEYSKCDLPLRTLESLLSGLGPAGPFDMVYWTGDIPAHNIWQQSRQDQLRALTTITALVKKFLGPVPVYPAVGNHESTPVNGFPPPFIKGNQSSHWLYEAMAEAWEPWLPAEALRTLRIGGFYALSPRPGLRLISLNMNFCSRENFWLLINSTDPAGQLQWLVGELQAAEDRGDKVHIIGHIPPGHCLKSWSWNYYRIVERYENTLAGQFFGHTHVDEFEVFYDEETLSRPLSVAFLAPSATTYIGLNPGYRVYQIDGNYSGSSHVVLDHETYIMNLTEANEPGATPHWYLLYRARETYGLPNALPTAWHDLVYRMRKDTQLFQTFWFLYHKGHPPSEPCGTPCRLATLCAQLSARSDSPALCRHLVPDASLPDVQSLWSMPLLC</sequence>